<gene>
    <name evidence="1" type="primary">rplA</name>
    <name type="ordered locus">BLD_1624</name>
</gene>
<accession>B3DPT0</accession>
<protein>
    <recommendedName>
        <fullName evidence="1">Large ribosomal subunit protein uL1</fullName>
    </recommendedName>
    <alternativeName>
        <fullName evidence="2">50S ribosomal protein L1</fullName>
    </alternativeName>
</protein>
<organism>
    <name type="scientific">Bifidobacterium longum (strain DJO10A)</name>
    <dbReference type="NCBI Taxonomy" id="205913"/>
    <lineage>
        <taxon>Bacteria</taxon>
        <taxon>Bacillati</taxon>
        <taxon>Actinomycetota</taxon>
        <taxon>Actinomycetes</taxon>
        <taxon>Bifidobacteriales</taxon>
        <taxon>Bifidobacteriaceae</taxon>
        <taxon>Bifidobacterium</taxon>
    </lineage>
</organism>
<evidence type="ECO:0000255" key="1">
    <source>
        <dbReference type="HAMAP-Rule" id="MF_01318"/>
    </source>
</evidence>
<evidence type="ECO:0000305" key="2"/>
<name>RL1_BIFLD</name>
<keyword id="KW-0678">Repressor</keyword>
<keyword id="KW-0687">Ribonucleoprotein</keyword>
<keyword id="KW-0689">Ribosomal protein</keyword>
<keyword id="KW-0694">RNA-binding</keyword>
<keyword id="KW-0699">rRNA-binding</keyword>
<keyword id="KW-0810">Translation regulation</keyword>
<keyword id="KW-0820">tRNA-binding</keyword>
<comment type="function">
    <text evidence="1">Binds directly to 23S rRNA. The L1 stalk is quite mobile in the ribosome, and is involved in E site tRNA release.</text>
</comment>
<comment type="function">
    <text evidence="1">Protein L1 is also a translational repressor protein, it controls the translation of the L11 operon by binding to its mRNA.</text>
</comment>
<comment type="subunit">
    <text evidence="1">Part of the 50S ribosomal subunit.</text>
</comment>
<comment type="similarity">
    <text evidence="1">Belongs to the universal ribosomal protein uL1 family.</text>
</comment>
<feature type="chain" id="PRO_1000141363" description="Large ribosomal subunit protein uL1">
    <location>
        <begin position="1"/>
        <end position="230"/>
    </location>
</feature>
<reference key="1">
    <citation type="journal article" date="2008" name="BMC Genomics">
        <title>Comparative genomic analysis of the gut bacterium Bifidobacterium longum reveals loci susceptible to deletion during pure culture growth.</title>
        <authorList>
            <person name="Lee J.H."/>
            <person name="Karamychev V.N."/>
            <person name="Kozyavkin S.A."/>
            <person name="Mills D."/>
            <person name="Pavlov A.R."/>
            <person name="Pavlova N.V."/>
            <person name="Polouchine N.N."/>
            <person name="Richardson P.M."/>
            <person name="Shakhova V.V."/>
            <person name="Slesarev A.I."/>
            <person name="Weimer B."/>
            <person name="O'Sullivan D.J."/>
        </authorList>
    </citation>
    <scope>NUCLEOTIDE SEQUENCE [LARGE SCALE GENOMIC DNA]</scope>
    <source>
        <strain>DJO10A</strain>
    </source>
</reference>
<dbReference type="EMBL" id="CP000605">
    <property type="protein sequence ID" value="ACD99069.1"/>
    <property type="molecule type" value="Genomic_DNA"/>
</dbReference>
<dbReference type="RefSeq" id="WP_003829786.1">
    <property type="nucleotide sequence ID" value="NZ_AABM02000049.1"/>
</dbReference>
<dbReference type="SMR" id="B3DPT0"/>
<dbReference type="GeneID" id="69578961"/>
<dbReference type="KEGG" id="blj:BLD_1624"/>
<dbReference type="HOGENOM" id="CLU_062853_0_0_11"/>
<dbReference type="Proteomes" id="UP000002419">
    <property type="component" value="Chromosome"/>
</dbReference>
<dbReference type="GO" id="GO:0015934">
    <property type="term" value="C:large ribosomal subunit"/>
    <property type="evidence" value="ECO:0007669"/>
    <property type="project" value="InterPro"/>
</dbReference>
<dbReference type="GO" id="GO:0019843">
    <property type="term" value="F:rRNA binding"/>
    <property type="evidence" value="ECO:0007669"/>
    <property type="project" value="UniProtKB-UniRule"/>
</dbReference>
<dbReference type="GO" id="GO:0003735">
    <property type="term" value="F:structural constituent of ribosome"/>
    <property type="evidence" value="ECO:0007669"/>
    <property type="project" value="InterPro"/>
</dbReference>
<dbReference type="GO" id="GO:0000049">
    <property type="term" value="F:tRNA binding"/>
    <property type="evidence" value="ECO:0007669"/>
    <property type="project" value="UniProtKB-KW"/>
</dbReference>
<dbReference type="GO" id="GO:0006417">
    <property type="term" value="P:regulation of translation"/>
    <property type="evidence" value="ECO:0007669"/>
    <property type="project" value="UniProtKB-KW"/>
</dbReference>
<dbReference type="GO" id="GO:0006412">
    <property type="term" value="P:translation"/>
    <property type="evidence" value="ECO:0007669"/>
    <property type="project" value="UniProtKB-UniRule"/>
</dbReference>
<dbReference type="CDD" id="cd00403">
    <property type="entry name" value="Ribosomal_L1"/>
    <property type="match status" value="1"/>
</dbReference>
<dbReference type="FunFam" id="3.40.50.790:FF:000001">
    <property type="entry name" value="50S ribosomal protein L1"/>
    <property type="match status" value="1"/>
</dbReference>
<dbReference type="Gene3D" id="3.30.190.20">
    <property type="match status" value="1"/>
</dbReference>
<dbReference type="Gene3D" id="3.40.50.790">
    <property type="match status" value="1"/>
</dbReference>
<dbReference type="HAMAP" id="MF_01318_B">
    <property type="entry name" value="Ribosomal_uL1_B"/>
    <property type="match status" value="1"/>
</dbReference>
<dbReference type="InterPro" id="IPR005878">
    <property type="entry name" value="Ribosom_uL1_bac-type"/>
</dbReference>
<dbReference type="InterPro" id="IPR002143">
    <property type="entry name" value="Ribosomal_uL1"/>
</dbReference>
<dbReference type="InterPro" id="IPR023674">
    <property type="entry name" value="Ribosomal_uL1-like"/>
</dbReference>
<dbReference type="InterPro" id="IPR028364">
    <property type="entry name" value="Ribosomal_uL1/biogenesis"/>
</dbReference>
<dbReference type="InterPro" id="IPR016095">
    <property type="entry name" value="Ribosomal_uL1_3-a/b-sand"/>
</dbReference>
<dbReference type="InterPro" id="IPR023673">
    <property type="entry name" value="Ribosomal_uL1_CS"/>
</dbReference>
<dbReference type="NCBIfam" id="TIGR01169">
    <property type="entry name" value="rplA_bact"/>
    <property type="match status" value="1"/>
</dbReference>
<dbReference type="PANTHER" id="PTHR36427">
    <property type="entry name" value="54S RIBOSOMAL PROTEIN L1, MITOCHONDRIAL"/>
    <property type="match status" value="1"/>
</dbReference>
<dbReference type="PANTHER" id="PTHR36427:SF3">
    <property type="entry name" value="LARGE RIBOSOMAL SUBUNIT PROTEIN UL1M"/>
    <property type="match status" value="1"/>
</dbReference>
<dbReference type="Pfam" id="PF00687">
    <property type="entry name" value="Ribosomal_L1"/>
    <property type="match status" value="1"/>
</dbReference>
<dbReference type="PIRSF" id="PIRSF002155">
    <property type="entry name" value="Ribosomal_L1"/>
    <property type="match status" value="1"/>
</dbReference>
<dbReference type="SUPFAM" id="SSF56808">
    <property type="entry name" value="Ribosomal protein L1"/>
    <property type="match status" value="1"/>
</dbReference>
<dbReference type="PROSITE" id="PS01199">
    <property type="entry name" value="RIBOSOMAL_L1"/>
    <property type="match status" value="1"/>
</dbReference>
<proteinExistence type="inferred from homology"/>
<sequence>MVKRSKKYREAAERVDRNNLYTANEAIALLKSMPSYNFDQTVEAVFRLSVDPRKADQLVRGTVNLPHGTGKTAKVLVFARGPKATEATEAGADIVGDDDLIAKVQGGFLDFDAVVATPDMMGKVGRLGRVLGPRGLMPNPKTGTVTMDVTKAVKDIKGGKIEFRVDKNGNLSFLIGKMSFDESALDENFKAVADEVKRLKPSTVKGRYLTKATITSTMNPGVPVDPNTLA</sequence>